<comment type="function">
    <text evidence="1">Binds 16S rRNA, required for the assembly of 30S particles and may also be responsible for determining the conformation of the 16S rRNA at the A site.</text>
</comment>
<comment type="subunit">
    <text evidence="1">Part of the 30S ribosomal subunit. Contacts proteins S3 and S10.</text>
</comment>
<comment type="similarity">
    <text evidence="1">Belongs to the universal ribosomal protein uS14 family.</text>
</comment>
<gene>
    <name evidence="1" type="primary">rpsN</name>
    <name type="ordered locus">FTN_0252</name>
</gene>
<evidence type="ECO:0000255" key="1">
    <source>
        <dbReference type="HAMAP-Rule" id="MF_00537"/>
    </source>
</evidence>
<evidence type="ECO:0000305" key="2"/>
<protein>
    <recommendedName>
        <fullName evidence="1">Small ribosomal subunit protein uS14</fullName>
    </recommendedName>
    <alternativeName>
        <fullName evidence="2">30S ribosomal protein S14</fullName>
    </alternativeName>
</protein>
<dbReference type="EMBL" id="CP000439">
    <property type="protein sequence ID" value="ABK89161.1"/>
    <property type="molecule type" value="Genomic_DNA"/>
</dbReference>
<dbReference type="RefSeq" id="WP_003032885.1">
    <property type="nucleotide sequence ID" value="NZ_CP009633.1"/>
</dbReference>
<dbReference type="SMR" id="A0Q4J6"/>
<dbReference type="GeneID" id="75264248"/>
<dbReference type="KEGG" id="ftn:FTN_0252"/>
<dbReference type="KEGG" id="ftx:AW25_1790"/>
<dbReference type="BioCyc" id="FTUL401614:G1G75-263-MONOMER"/>
<dbReference type="Proteomes" id="UP000000762">
    <property type="component" value="Chromosome"/>
</dbReference>
<dbReference type="GO" id="GO:0005737">
    <property type="term" value="C:cytoplasm"/>
    <property type="evidence" value="ECO:0007669"/>
    <property type="project" value="UniProtKB-ARBA"/>
</dbReference>
<dbReference type="GO" id="GO:0015935">
    <property type="term" value="C:small ribosomal subunit"/>
    <property type="evidence" value="ECO:0007669"/>
    <property type="project" value="TreeGrafter"/>
</dbReference>
<dbReference type="GO" id="GO:0019843">
    <property type="term" value="F:rRNA binding"/>
    <property type="evidence" value="ECO:0007669"/>
    <property type="project" value="UniProtKB-UniRule"/>
</dbReference>
<dbReference type="GO" id="GO:0003735">
    <property type="term" value="F:structural constituent of ribosome"/>
    <property type="evidence" value="ECO:0007669"/>
    <property type="project" value="InterPro"/>
</dbReference>
<dbReference type="GO" id="GO:0006412">
    <property type="term" value="P:translation"/>
    <property type="evidence" value="ECO:0007669"/>
    <property type="project" value="UniProtKB-UniRule"/>
</dbReference>
<dbReference type="FunFam" id="1.10.287.1480:FF:000001">
    <property type="entry name" value="30S ribosomal protein S14"/>
    <property type="match status" value="1"/>
</dbReference>
<dbReference type="Gene3D" id="1.10.287.1480">
    <property type="match status" value="1"/>
</dbReference>
<dbReference type="HAMAP" id="MF_00537">
    <property type="entry name" value="Ribosomal_uS14_1"/>
    <property type="match status" value="1"/>
</dbReference>
<dbReference type="InterPro" id="IPR001209">
    <property type="entry name" value="Ribosomal_uS14"/>
</dbReference>
<dbReference type="InterPro" id="IPR023036">
    <property type="entry name" value="Ribosomal_uS14_bac/plastid"/>
</dbReference>
<dbReference type="InterPro" id="IPR018271">
    <property type="entry name" value="Ribosomal_uS14_CS"/>
</dbReference>
<dbReference type="NCBIfam" id="NF006477">
    <property type="entry name" value="PRK08881.1"/>
    <property type="match status" value="1"/>
</dbReference>
<dbReference type="PANTHER" id="PTHR19836">
    <property type="entry name" value="30S RIBOSOMAL PROTEIN S14"/>
    <property type="match status" value="1"/>
</dbReference>
<dbReference type="PANTHER" id="PTHR19836:SF19">
    <property type="entry name" value="SMALL RIBOSOMAL SUBUNIT PROTEIN US14M"/>
    <property type="match status" value="1"/>
</dbReference>
<dbReference type="Pfam" id="PF00253">
    <property type="entry name" value="Ribosomal_S14"/>
    <property type="match status" value="1"/>
</dbReference>
<dbReference type="SUPFAM" id="SSF57716">
    <property type="entry name" value="Glucocorticoid receptor-like (DNA-binding domain)"/>
    <property type="match status" value="1"/>
</dbReference>
<dbReference type="PROSITE" id="PS00527">
    <property type="entry name" value="RIBOSOMAL_S14"/>
    <property type="match status" value="1"/>
</dbReference>
<proteinExistence type="inferred from homology"/>
<organism>
    <name type="scientific">Francisella tularensis subsp. novicida (strain U112)</name>
    <dbReference type="NCBI Taxonomy" id="401614"/>
    <lineage>
        <taxon>Bacteria</taxon>
        <taxon>Pseudomonadati</taxon>
        <taxon>Pseudomonadota</taxon>
        <taxon>Gammaproteobacteria</taxon>
        <taxon>Thiotrichales</taxon>
        <taxon>Francisellaceae</taxon>
        <taxon>Francisella</taxon>
    </lineage>
</organism>
<keyword id="KW-0687">Ribonucleoprotein</keyword>
<keyword id="KW-0689">Ribosomal protein</keyword>
<keyword id="KW-0694">RNA-binding</keyword>
<keyword id="KW-0699">rRNA-binding</keyword>
<feature type="chain" id="PRO_1000128409" description="Small ribosomal subunit protein uS14">
    <location>
        <begin position="1"/>
        <end position="101"/>
    </location>
</feature>
<sequence>MAKKSMIQRELKREKLVAKYAQKRAELKAIILDINSTEEQIWEAQIKLQKLPVNSSASRVQRRCKVTGRPHAVYRKFGLCRNKLREYAMAGDVPGLKKASW</sequence>
<reference key="1">
    <citation type="journal article" date="2007" name="Genome Biol.">
        <title>Comparison of Francisella tularensis genomes reveals evolutionary events associated with the emergence of human pathogenic strains.</title>
        <authorList>
            <person name="Rohmer L."/>
            <person name="Fong C."/>
            <person name="Abmayr S."/>
            <person name="Wasnick M."/>
            <person name="Larson Freeman T.J."/>
            <person name="Radey M."/>
            <person name="Guina T."/>
            <person name="Svensson K."/>
            <person name="Hayden H.S."/>
            <person name="Jacobs M."/>
            <person name="Gallagher L.A."/>
            <person name="Manoil C."/>
            <person name="Ernst R.K."/>
            <person name="Drees B."/>
            <person name="Buckley D."/>
            <person name="Haugen E."/>
            <person name="Bovee D."/>
            <person name="Zhou Y."/>
            <person name="Chang J."/>
            <person name="Levy R."/>
            <person name="Lim R."/>
            <person name="Gillett W."/>
            <person name="Guenthener D."/>
            <person name="Kang A."/>
            <person name="Shaffer S.A."/>
            <person name="Taylor G."/>
            <person name="Chen J."/>
            <person name="Gallis B."/>
            <person name="D'Argenio D.A."/>
            <person name="Forsman M."/>
            <person name="Olson M.V."/>
            <person name="Goodlett D.R."/>
            <person name="Kaul R."/>
            <person name="Miller S.I."/>
            <person name="Brittnacher M.J."/>
        </authorList>
    </citation>
    <scope>NUCLEOTIDE SEQUENCE [LARGE SCALE GENOMIC DNA]</scope>
    <source>
        <strain>U112</strain>
    </source>
</reference>
<accession>A0Q4J6</accession>
<name>RS14_FRATN</name>